<keyword id="KW-0002">3D-structure</keyword>
<keyword id="KW-0106">Calcium</keyword>
<keyword id="KW-0903">Direct protein sequencing</keyword>
<keyword id="KW-0967">Endosome</keyword>
<keyword id="KW-0456">Lyase</keyword>
<keyword id="KW-0470">Melanin biosynthesis</keyword>
<keyword id="KW-0479">Metal-binding</keyword>
<keyword id="KW-1185">Reference proteome</keyword>
<proteinExistence type="evidence at protein level"/>
<evidence type="ECO:0000250" key="1">
    <source>
        <dbReference type="UniProtKB" id="O14434"/>
    </source>
</evidence>
<evidence type="ECO:0000269" key="2">
    <source>
    </source>
</evidence>
<evidence type="ECO:0000269" key="3">
    <source>
    </source>
</evidence>
<evidence type="ECO:0000269" key="4">
    <source>
    </source>
</evidence>
<evidence type="ECO:0000269" key="5">
    <source>
    </source>
</evidence>
<evidence type="ECO:0000269" key="6">
    <source>
    </source>
</evidence>
<evidence type="ECO:0000269" key="7">
    <source>
    </source>
</evidence>
<evidence type="ECO:0000269" key="8">
    <source>
    </source>
</evidence>
<evidence type="ECO:0000269" key="9">
    <source>
    </source>
</evidence>
<evidence type="ECO:0000269" key="10">
    <source>
    </source>
</evidence>
<evidence type="ECO:0000269" key="11">
    <source>
    </source>
</evidence>
<evidence type="ECO:0000269" key="12">
    <source>
    </source>
</evidence>
<evidence type="ECO:0000269" key="13">
    <source>
    </source>
</evidence>
<evidence type="ECO:0000269" key="14">
    <source>
    </source>
</evidence>
<evidence type="ECO:0000269" key="15">
    <source>
    </source>
</evidence>
<evidence type="ECO:0000269" key="16">
    <source>
    </source>
</evidence>
<evidence type="ECO:0000269" key="17">
    <source>
    </source>
</evidence>
<evidence type="ECO:0000269" key="18">
    <source>
    </source>
</evidence>
<evidence type="ECO:0000303" key="19">
    <source>
    </source>
</evidence>
<evidence type="ECO:0000303" key="20">
    <source>
    </source>
</evidence>
<evidence type="ECO:0000305" key="21"/>
<evidence type="ECO:0000305" key="22">
    <source>
    </source>
</evidence>
<evidence type="ECO:0000305" key="23">
    <source>
    </source>
</evidence>
<evidence type="ECO:0000305" key="24">
    <source>
    </source>
</evidence>
<evidence type="ECO:0000305" key="25">
    <source>
    </source>
</evidence>
<evidence type="ECO:0007829" key="26">
    <source>
        <dbReference type="PDB" id="1IDP"/>
    </source>
</evidence>
<evidence type="ECO:0007829" key="27">
    <source>
        <dbReference type="PDB" id="3STD"/>
    </source>
</evidence>
<sequence length="172" mass="20250">MGSQVQKSDEITFSDYLGLMTCVYEWADSYDSKDWDRLRKVIAPTLRIDYRSFLDKLWEAMPAEEFVGMVSSKQVLGDPTLRTQHFIGGTRWEKVSEDEVIGYHQLRVPHQRYKDTTMKEVTMKGHAHSANLHWYKKIDGVWKFAGLKPDIRWGEFDFDRIFEDGRETFGDK</sequence>
<comment type="function">
    <text evidence="2 3 4 5 6 8 9 10 11 15 16 17 18">Scytalone dehydratase; part of the gene cluster that mediates the biosynthesis of dihydroxynaphthalene melanin, a bluish-green pigment and a structural component of the conidial wall (PubMed:9571787). Within the pathway, catalyzes the dehydration of scytalone as well as of vermelone (PubMed:10320327, PubMed:10386945, PubMed:10386946, PubMed:10636235, PubMed:10694394, PubMed:10913266, PubMed:11790103, PubMed:12413868, PubMed:15056895, PubMed:9466791, PubMed:9466792, PubMed:9539706, PubMed:9571787). Is also able to dehydrate the alternate substrate 2,3-dihydro-2,5-dihydroxy-4H-benzopyran-4-one (DDBO) to 5-hydroxy-4H-1-benzopyran-4-one (HBO) (PubMed:10320327, PubMed:10386945, PubMed:11790103, PubMed:9466791, PubMed:9466792).</text>
</comment>
<comment type="catalytic activity">
    <reaction evidence="2 3 4 5 6 8 9 10 11 15 16 17 18">
        <text>scytalone = 1,3,8-trihydroxynaphthalene + H2O</text>
        <dbReference type="Rhea" id="RHEA:24396"/>
        <dbReference type="ChEBI" id="CHEBI:15377"/>
        <dbReference type="ChEBI" id="CHEBI:16945"/>
        <dbReference type="ChEBI" id="CHEBI:18393"/>
        <dbReference type="EC" id="4.2.1.94"/>
    </reaction>
</comment>
<comment type="activity regulation">
    <text evidence="3 4 7 10 11 13">(N-phenoxypropyl)-carboxamides such as carpropamid and derivatives of norephedrine act as inhibitors of scytalone dehydratase activity.</text>
</comment>
<comment type="biophysicochemical properties">
    <kinetics>
        <KM evidence="2 15">15 uM for 2,3-dihydro-2,5-dihydroxy-4H-benzopyran-4-one (DDBO)</KM>
        <KM evidence="2">33 uM for scytalone</KM>
        <KM evidence="2 9">31 uM for vermelone</KM>
    </kinetics>
</comment>
<comment type="pathway">
    <text evidence="18">Pigment biosynthesis; melanin biosynthesis.</text>
</comment>
<comment type="subunit">
    <text evidence="14">Homotrimer (PubMed:7866745). Each subunit contains an active site, located in the central part of the hydrophobic core of the monomer, which functions independently (PubMed:7866745).</text>
</comment>
<comment type="subcellular location">
    <subcellularLocation>
        <location evidence="1">Endosome</location>
    </subcellularLocation>
</comment>
<comment type="induction">
    <text evidence="12 18">Expression is induced in the stationary phase, when melanin synthesis occurs (PubMed:9571787). Expression is specifically induced during appressorium formation (PubMed:15378734).</text>
</comment>
<comment type="similarity">
    <text evidence="21">Belongs to the scytalone dehydratase family.</text>
</comment>
<name>SCYD_PYRO7</name>
<gene>
    <name type="primary">SDH1</name>
    <name type="ORF">MGG_05059</name>
</gene>
<protein>
    <recommendedName>
        <fullName evidence="20">Scytalone dehydratase</fullName>
        <shortName evidence="19">SD</shortName>
        <shortName evidence="20">SDH</shortName>
        <ecNumber evidence="2 3 15 16 17 18">4.2.1.94</ecNumber>
    </recommendedName>
</protein>
<feature type="chain" id="PRO_0000097639" description="Scytalone dehydratase">
    <location>
        <begin position="1"/>
        <end position="172"/>
    </location>
</feature>
<feature type="active site" evidence="23">
    <location>
        <position position="85"/>
    </location>
</feature>
<feature type="active site" evidence="23">
    <location>
        <position position="110"/>
    </location>
</feature>
<feature type="binding site" evidence="25">
    <location>
        <position position="30"/>
    </location>
    <ligand>
        <name>substrate</name>
    </ligand>
</feature>
<feature type="binding site" evidence="24">
    <location>
        <position position="50"/>
    </location>
    <ligand>
        <name>substrate</name>
    </ligand>
</feature>
<feature type="binding site" evidence="22">
    <location>
        <position position="53"/>
    </location>
    <ligand>
        <name>substrate</name>
    </ligand>
</feature>
<feature type="binding site" evidence="22 23 25">
    <location>
        <position position="131"/>
    </location>
    <ligand>
        <name>substrate</name>
    </ligand>
</feature>
<feature type="mutagenesis site" description="Results in a 9-fold decrease of activity with scytalone as the substrate and increases binding of salicylamide inhibitors." evidence="2 5">
    <original>Y</original>
    <variation>F</variation>
    <location>
        <position position="30"/>
    </location>
</feature>
<feature type="mutagenesis site" description="Reduces catalysis 5000-fold and substrate affinity about 4-fold with scytalone as the substrate." evidence="2">
    <original>D</original>
    <variation>N</variation>
    <location>
        <position position="31"/>
    </location>
</feature>
<feature type="mutagenesis site" description="Results in a 500-fold decrease of activity with scytalone as the substrate and increases binding of salicylamide inhibitors." evidence="2 5">
    <original>Y</original>
    <variation>F</variation>
    <location>
        <position position="50"/>
    </location>
</feature>
<feature type="mutagenesis site" description="Leads to significantly higher relative substrate specificities (DDBO/vermelone)." evidence="9">
    <original>F</original>
    <variation>A</variation>
    <location>
        <position position="53"/>
    </location>
</feature>
<feature type="mutagenesis site" description="Affects the binding of inhibitors and has significantly higher relative substrate specificities (DDBO/vermelone)." evidence="8 9">
    <original>F</original>
    <variation>L</variation>
    <location>
        <position position="53"/>
    </location>
</feature>
<feature type="mutagenesis site" description="Affects the binding of inhibitors." evidence="8">
    <original>M</original>
    <variation>L</variation>
    <location>
        <position position="69"/>
    </location>
</feature>
<feature type="mutagenesis site" description="Affects the binding of inhibitors and reduces more than 200-fold inhibition by carpropamid." evidence="8 11">
    <original>V</original>
    <variation>A</variation>
    <location>
        <position position="75"/>
    </location>
</feature>
<feature type="mutagenesis site" description="Strongly reduces inhibition by carpropamid." evidence="13">
    <original>V</original>
    <variation>M</variation>
    <location>
        <position position="75"/>
    </location>
</feature>
<feature type="mutagenesis site" description="Greatly decreases catalytic efficiency and decreases binding to salicylamide inhibitors." evidence="2 5">
    <original>H</original>
    <variation>N</variation>
    <location>
        <position position="85"/>
    </location>
</feature>
<feature type="mutagenesis site" description="Causes a 250-fold decrease of activity and a 6-fold increase in Km with scytalone as the substrate, decreases binding of salicylamide inhibitors, and has significantly higher relative substrate specificities (DDBO/vermelone)." evidence="2 5 9">
    <original>H</original>
    <variation>N</variation>
    <location>
        <position position="110"/>
    </location>
</feature>
<feature type="mutagenesis site" description="Results in a 80-fold decrease of activity and a 7-fold increase in Km with scytalone as the substrate." evidence="2">
    <original>S</original>
    <variation>A</variation>
    <location>
        <position position="129"/>
    </location>
</feature>
<feature type="mutagenesis site" description="Results in a 120-fold decrease of activity and a 23-fold increase in Km with scytalone as the substrate." evidence="2">
    <original>S</original>
    <variation>T</variation>
    <location>
        <position position="129"/>
    </location>
</feature>
<feature type="mutagenesis site" description="Decreases turnover by nearly 90-fold and increases Km 8-fold with scytalone as the substrate, decreases strongly binding of salicylamide inhibitors, and has significantly higher relative substrate specificities (DDBO/vermelone)." evidence="2 5 9">
    <original>N</original>
    <variation>A</variation>
    <location>
        <position position="131"/>
    </location>
</feature>
<feature type="mutagenesis site" description="Affects the binding of inhibitors." evidence="8">
    <original>F</original>
    <variation>L</variation>
    <location>
        <position position="158"/>
    </location>
</feature>
<feature type="mutagenesis site" description="Affects the binding of inhibitors." evidence="8">
    <original>F</original>
    <variation>L</variation>
    <location>
        <position position="162"/>
    </location>
</feature>
<feature type="helix" evidence="26">
    <location>
        <begin position="13"/>
        <end position="32"/>
    </location>
</feature>
<feature type="helix" evidence="26">
    <location>
        <begin position="35"/>
        <end position="39"/>
    </location>
</feature>
<feature type="strand" evidence="26">
    <location>
        <begin position="42"/>
        <end position="49"/>
    </location>
</feature>
<feature type="helix" evidence="26">
    <location>
        <begin position="51"/>
        <end position="54"/>
    </location>
</feature>
<feature type="strand" evidence="26">
    <location>
        <begin position="57"/>
        <end position="62"/>
    </location>
</feature>
<feature type="helix" evidence="26">
    <location>
        <begin position="63"/>
        <end position="71"/>
    </location>
</feature>
<feature type="turn" evidence="26">
    <location>
        <begin position="73"/>
        <end position="76"/>
    </location>
</feature>
<feature type="strand" evidence="26">
    <location>
        <begin position="81"/>
        <end position="83"/>
    </location>
</feature>
<feature type="strand" evidence="26">
    <location>
        <begin position="86"/>
        <end position="96"/>
    </location>
</feature>
<feature type="strand" evidence="26">
    <location>
        <begin position="99"/>
        <end position="115"/>
    </location>
</feature>
<feature type="strand" evidence="26">
    <location>
        <begin position="121"/>
        <end position="138"/>
    </location>
</feature>
<feature type="strand" evidence="26">
    <location>
        <begin position="141"/>
        <end position="155"/>
    </location>
</feature>
<feature type="helix" evidence="27">
    <location>
        <begin position="158"/>
        <end position="161"/>
    </location>
</feature>
<feature type="helix" evidence="27">
    <location>
        <begin position="163"/>
        <end position="169"/>
    </location>
</feature>
<dbReference type="EC" id="4.2.1.94" evidence="2 3 15 16 17 18"/>
<dbReference type="EMBL" id="AB004741">
    <property type="protein sequence ID" value="BAA34046.1"/>
    <property type="molecule type" value="mRNA"/>
</dbReference>
<dbReference type="EMBL" id="CM001233">
    <property type="protein sequence ID" value="EHA52765.1"/>
    <property type="molecule type" value="Genomic_DNA"/>
</dbReference>
<dbReference type="RefSeq" id="XP_003712572.1">
    <property type="nucleotide sequence ID" value="XM_003712524.1"/>
</dbReference>
<dbReference type="PDB" id="1IDP">
    <property type="method" value="X-ray"/>
    <property type="resolution" value="1.45 A"/>
    <property type="chains" value="A/B/C=1-172"/>
</dbReference>
<dbReference type="PDB" id="1STD">
    <property type="method" value="X-ray"/>
    <property type="resolution" value="2.90 A"/>
    <property type="chains" value="A=1-172"/>
</dbReference>
<dbReference type="PDB" id="2STD">
    <property type="method" value="X-ray"/>
    <property type="resolution" value="2.10 A"/>
    <property type="chains" value="A=1-172"/>
</dbReference>
<dbReference type="PDB" id="3STD">
    <property type="method" value="X-ray"/>
    <property type="resolution" value="1.65 A"/>
    <property type="chains" value="A/B/C=10-172"/>
</dbReference>
<dbReference type="PDB" id="4STD">
    <property type="method" value="X-ray"/>
    <property type="resolution" value="2.15 A"/>
    <property type="chains" value="A/B/C=10-172"/>
</dbReference>
<dbReference type="PDB" id="5STD">
    <property type="method" value="X-ray"/>
    <property type="resolution" value="1.95 A"/>
    <property type="chains" value="A/B/C=10-172"/>
</dbReference>
<dbReference type="PDB" id="6STD">
    <property type="method" value="X-ray"/>
    <property type="resolution" value="1.80 A"/>
    <property type="chains" value="A/B/C=10-172"/>
</dbReference>
<dbReference type="PDB" id="7STD">
    <property type="method" value="X-ray"/>
    <property type="resolution" value="1.80 A"/>
    <property type="chains" value="A/B/C=10-172"/>
</dbReference>
<dbReference type="PDBsum" id="1IDP"/>
<dbReference type="PDBsum" id="1STD"/>
<dbReference type="PDBsum" id="2STD"/>
<dbReference type="PDBsum" id="3STD"/>
<dbReference type="PDBsum" id="4STD"/>
<dbReference type="PDBsum" id="5STD"/>
<dbReference type="PDBsum" id="6STD"/>
<dbReference type="PDBsum" id="7STD"/>
<dbReference type="SMR" id="P56221"/>
<dbReference type="STRING" id="242507.P56221"/>
<dbReference type="BindingDB" id="P56221"/>
<dbReference type="ChEMBL" id="CHEMBL2578"/>
<dbReference type="EnsemblFungi" id="MGG_05059T0">
    <property type="protein sequence ID" value="MGG_05059T0"/>
    <property type="gene ID" value="MGG_05059"/>
</dbReference>
<dbReference type="GeneID" id="2675492"/>
<dbReference type="KEGG" id="mgr:MGG_05059"/>
<dbReference type="VEuPathDB" id="FungiDB:MGG_05059"/>
<dbReference type="eggNOG" id="ENOG502SNND">
    <property type="taxonomic scope" value="Eukaryota"/>
</dbReference>
<dbReference type="HOGENOM" id="CLU_101889_0_0_1"/>
<dbReference type="InParanoid" id="P56221"/>
<dbReference type="OMA" id="SACYEWA"/>
<dbReference type="OrthoDB" id="5281072at2759"/>
<dbReference type="BRENDA" id="4.2.1.94">
    <property type="organism ID" value="3152"/>
</dbReference>
<dbReference type="UniPathway" id="UPA00785"/>
<dbReference type="EvolutionaryTrace" id="P56221"/>
<dbReference type="PRO" id="PR:P56221"/>
<dbReference type="Proteomes" id="UP000009058">
    <property type="component" value="Chromosome 3"/>
</dbReference>
<dbReference type="GO" id="GO:0005768">
    <property type="term" value="C:endosome"/>
    <property type="evidence" value="ECO:0007669"/>
    <property type="project" value="UniProtKB-SubCell"/>
</dbReference>
<dbReference type="GO" id="GO:0046872">
    <property type="term" value="F:metal ion binding"/>
    <property type="evidence" value="ECO:0007669"/>
    <property type="project" value="UniProtKB-KW"/>
</dbReference>
<dbReference type="GO" id="GO:0030411">
    <property type="term" value="F:scytalone dehydratase activity"/>
    <property type="evidence" value="ECO:0007669"/>
    <property type="project" value="UniProtKB-EC"/>
</dbReference>
<dbReference type="GO" id="GO:0042438">
    <property type="term" value="P:melanin biosynthetic process"/>
    <property type="evidence" value="ECO:0007669"/>
    <property type="project" value="UniProtKB-UniPathway"/>
</dbReference>
<dbReference type="CDD" id="cd00531">
    <property type="entry name" value="NTF2_like"/>
    <property type="match status" value="1"/>
</dbReference>
<dbReference type="Gene3D" id="3.10.450.50">
    <property type="match status" value="1"/>
</dbReference>
<dbReference type="InterPro" id="IPR032710">
    <property type="entry name" value="NTF2-like_dom_sf"/>
</dbReference>
<dbReference type="InterPro" id="IPR004235">
    <property type="entry name" value="Scytalone_dehydratase"/>
</dbReference>
<dbReference type="InterPro" id="IPR049884">
    <property type="entry name" value="Scytalone_dh"/>
</dbReference>
<dbReference type="Pfam" id="PF02982">
    <property type="entry name" value="Scytalone_dh"/>
    <property type="match status" value="1"/>
</dbReference>
<dbReference type="PIRSF" id="PIRSF024851">
    <property type="entry name" value="SCD1"/>
    <property type="match status" value="1"/>
</dbReference>
<dbReference type="SUPFAM" id="SSF54427">
    <property type="entry name" value="NTF2-like"/>
    <property type="match status" value="1"/>
</dbReference>
<organism>
    <name type="scientific">Pyricularia oryzae (strain 70-15 / ATCC MYA-4617 / FGSC 8958)</name>
    <name type="common">Rice blast fungus</name>
    <name type="synonym">Magnaporthe oryzae</name>
    <dbReference type="NCBI Taxonomy" id="242507"/>
    <lineage>
        <taxon>Eukaryota</taxon>
        <taxon>Fungi</taxon>
        <taxon>Dikarya</taxon>
        <taxon>Ascomycota</taxon>
        <taxon>Pezizomycotina</taxon>
        <taxon>Sordariomycetes</taxon>
        <taxon>Sordariomycetidae</taxon>
        <taxon>Magnaporthales</taxon>
        <taxon>Pyriculariaceae</taxon>
        <taxon>Pyricularia</taxon>
    </lineage>
</organism>
<accession>P56221</accession>
<accession>A4QTI6</accession>
<accession>G4N445</accession>
<reference key="1">
    <citation type="journal article" date="1998" name="Biosci. Biotechnol. Biochem.">
        <title>cDNA cloning, expression, and mutagenesis of scytalone dehydratase needed for pathogenicity of the rice blast fungus, Pyricularia oryzae.</title>
        <authorList>
            <person name="Motoyama T."/>
            <person name="Imanishi K."/>
            <person name="Yamaguchi I."/>
        </authorList>
    </citation>
    <scope>NUCLEOTIDE SEQUENCE [MRNA]</scope>
    <scope>INDUCTION</scope>
    <scope>FUNCTION</scope>
    <scope>CATALYTIC ACTIVITY</scope>
</reference>
<reference key="2">
    <citation type="journal article" date="2005" name="Nature">
        <title>The genome sequence of the rice blast fungus Magnaporthe grisea.</title>
        <authorList>
            <person name="Dean R.A."/>
            <person name="Talbot N.J."/>
            <person name="Ebbole D.J."/>
            <person name="Farman M.L."/>
            <person name="Mitchell T.K."/>
            <person name="Orbach M.J."/>
            <person name="Thon M.R."/>
            <person name="Kulkarni R."/>
            <person name="Xu J.-R."/>
            <person name="Pan H."/>
            <person name="Read N.D."/>
            <person name="Lee Y.-H."/>
            <person name="Carbone I."/>
            <person name="Brown D."/>
            <person name="Oh Y.Y."/>
            <person name="Donofrio N."/>
            <person name="Jeong J.S."/>
            <person name="Soanes D.M."/>
            <person name="Djonovic S."/>
            <person name="Kolomiets E."/>
            <person name="Rehmeyer C."/>
            <person name="Li W."/>
            <person name="Harding M."/>
            <person name="Kim S."/>
            <person name="Lebrun M.-H."/>
            <person name="Bohnert H."/>
            <person name="Coughlan S."/>
            <person name="Butler J."/>
            <person name="Calvo S.E."/>
            <person name="Ma L.-J."/>
            <person name="Nicol R."/>
            <person name="Purcell S."/>
            <person name="Nusbaum C."/>
            <person name="Galagan J.E."/>
            <person name="Birren B.W."/>
        </authorList>
    </citation>
    <scope>NUCLEOTIDE SEQUENCE [LARGE SCALE GENOMIC DNA]</scope>
    <source>
        <strain>70-15 / ATCC MYA-4617 / FGSC 8958</strain>
    </source>
</reference>
<reference key="3">
    <citation type="journal article" date="2004" name="Proteomics">
        <title>Proteome analysis of rice blast fungus (Magnaporthe grisea) proteome during appressorium formation.</title>
        <authorList>
            <person name="Kim S.T."/>
            <person name="Yu S."/>
            <person name="Kim S.G."/>
            <person name="Kim H.J."/>
            <person name="Kang S.Y."/>
            <person name="Hwang D.H."/>
            <person name="Jang Y.S."/>
            <person name="Kang K.Y."/>
        </authorList>
    </citation>
    <scope>PROTEIN SEQUENCE OF 95-106</scope>
    <scope>INDUCTION</scope>
</reference>
<reference key="4">
    <citation type="journal article" date="1993" name="J. Mol. Biol.">
        <title>Preliminary crystallographic studies on scytalone dehydratase from Magnaporthe grisea.</title>
        <authorList>
            <person name="Lundqvist T."/>
            <person name="Weber P.C."/>
            <person name="Hodge C.N."/>
            <person name="Braswell E.H."/>
            <person name="Rice J."/>
            <person name="Pierce J."/>
        </authorList>
    </citation>
    <scope>CRYSTALLIZATION</scope>
</reference>
<reference key="5">
    <citation type="journal article" date="1998" name="Anal. Biochem.">
        <title>2,3-Dihydro-2,5-dihydroxy-4H-benzopyran-4-one: a nonphysiological substrate for fungal melanin biosynthetic enzymes.</title>
        <authorList>
            <person name="Thompson J.E."/>
            <person name="Basarab G.S."/>
            <person name="Pierce J."/>
            <person name="Hodge C.N."/>
            <person name="Jordan D.B."/>
        </authorList>
    </citation>
    <scope>FUNCTION</scope>
    <scope>CATALYTIC ACTIVITY</scope>
    <scope>BIOPHYSICOCHEMICAL PROPERTIES</scope>
</reference>
<reference key="6">
    <citation type="journal article" date="1998" name="Anal. Biochem.">
        <title>Partition analysis of an enzyme acting concurrently upon two substrates in a continuous multiwavelength assay.</title>
        <authorList>
            <person name="Thompson J.E."/>
            <person name="Jordan D.B."/>
        </authorList>
    </citation>
    <scope>FUNCTION</scope>
    <scope>CATALYTIC ACTIVITY</scope>
</reference>
<reference key="7">
    <citation type="journal article" date="1998" name="Proc. Natl. Acad. Sci. U.S.A.">
        <title>Role of a critical water in scytalone dehydratase-catalyzed reaction.</title>
        <authorList>
            <person name="Zheng Y.J."/>
            <person name="Bruice T.C."/>
        </authorList>
    </citation>
    <scope>FUNCTION</scope>
    <scope>CATALYTIC ACTIVITY</scope>
    <scope>ACTIVE SITE</scope>
</reference>
<reference key="8">
    <citation type="journal article" date="1999" name="Biochemistry">
        <title>Catalytic mechanism of scytalone dehydratase: site-directed mutagenesis, kinetic isotope effects, and alternate substrates.</title>
        <authorList>
            <person name="Basarab G.S."/>
            <person name="Steffens J.J."/>
            <person name="Wawrzak Z."/>
            <person name="Schwartz R.S."/>
            <person name="Lundqvist T."/>
            <person name="Jordan D.B."/>
        </authorList>
    </citation>
    <scope>FUNCTION</scope>
    <scope>CATALYTIC ACTIVITY</scope>
    <scope>BIOPHYSICOCHEMICAL PROPERTIES</scope>
    <scope>ACTIVE SITE</scope>
    <scope>MUTAGENESIS OF TYR-30; ASP-31; TYR-50; HIS-85; HIS-110; SER-129 AND ASN-131</scope>
</reference>
<reference key="9">
    <citation type="journal article" date="1999" name="Bioorg. Med. Chem. Lett.">
        <title>Design of scytalone dehydratase inhibitors as rice blast fungicides: (N-phenoxypropyl)-carboxamides.</title>
        <authorList>
            <person name="Jordan D.B."/>
            <person name="Lessen T.A."/>
            <person name="Wawrzak Z."/>
            <person name="Bisaha J.J."/>
            <person name="Gehret T.C."/>
            <person name="Hansen S.L."/>
            <person name="Schwartz R.S."/>
            <person name="Basarab G.S."/>
        </authorList>
    </citation>
    <scope>FUNCTION</scope>
    <scope>CATALYTIC ACTIVITY</scope>
    <scope>ACTIVITY REGULATION</scope>
</reference>
<reference key="10">
    <citation type="journal article" date="1999" name="Bioorg. Med. Chem. Lett.">
        <title>Design of scytalone dehydratase inhibitors as rice blast fungicides: derivatives of norephedrine.</title>
        <authorList>
            <person name="Basarab G.S."/>
            <person name="Jordan D.B."/>
            <person name="Gehret T.C."/>
            <person name="Schwartz R.S."/>
            <person name="Wawrzak Z."/>
        </authorList>
    </citation>
    <scope>FUNCTION</scope>
    <scope>CATALYTIC ACTIVITY</scope>
    <scope>ACTIVITY REGULATION</scope>
</reference>
<reference key="11">
    <citation type="journal article" date="2000" name="Biochemistry">
        <title>Stereochemistry of the enolization of scytalone by scytalone dehydratase.</title>
        <authorList>
            <person name="Jordan D.B."/>
            <person name="Zheng Y.J."/>
            <person name="Lockett B.A."/>
            <person name="Basarab G.S."/>
        </authorList>
    </citation>
    <scope>FUNCTION</scope>
    <scope>CATALYTIC ACTIVITY</scope>
</reference>
<reference key="12">
    <citation type="journal article" date="2000" name="Biochemistry">
        <title>Tight binding inhibitors of scytalone dehydratase: effects of site-directed mutations.</title>
        <authorList>
            <person name="Jordan D.B."/>
            <person name="Basarab G.S."/>
            <person name="Steffens J.J."/>
            <person name="Schwartz R.S."/>
            <person name="Doughty J.G."/>
        </authorList>
    </citation>
    <scope>FUNCTION</scope>
    <scope>CATALYTIC ACTIVITY</scope>
    <scope>INHIBITOR-BINDING</scope>
    <scope>MUTAGENESIS OF PHE-53; MET-69; VAL-75; PHE-158 AND PHE-162</scope>
</reference>
<reference key="13">
    <citation type="journal article" date="2000" name="Bioorg. Med. Chem. Lett.">
        <title>Binding dynamics of two water molecules constrained within the scytalone dehydratase binding pocket.</title>
        <authorList>
            <person name="Jordan D.B."/>
            <person name="Basarab G.S."/>
        </authorList>
    </citation>
    <scope>FUNCTION</scope>
    <scope>CATALYTIC ACTIVITY</scope>
    <scope>MUTAGENESIS OF TYR-30; TYR-50; HIS-85; HIS-110 AND ASN-131</scope>
</reference>
<reference key="14">
    <citation type="journal article" date="2000" name="Bioorg. Med. Chem.">
        <title>Cyclobutane carboxamide inhibitors of fungal melanin: biosynthesis and their evaluation as fungicides.</title>
        <authorList>
            <person name="Jennings L.D."/>
            <person name="Rayner D.R."/>
            <person name="Jordan D.B."/>
            <person name="Okonya J.F."/>
            <person name="Basarab G.S."/>
            <person name="Amorose D.K."/>
            <person name="Anaclerio B.M."/>
            <person name="Lee J.K."/>
            <person name="Schwartz R.S."/>
            <person name="Whitmore K.A."/>
        </authorList>
    </citation>
    <scope>ACTIVITY REGULATION</scope>
</reference>
<reference key="15">
    <citation type="journal article" date="2002" name="Biochemistry">
        <title>Roles of substrate distortion and intramolecular hydrogen bonding in enzymatic catalysis by scytalone dehydratase.</title>
        <authorList>
            <person name="Zheng Y.J."/>
            <person name="Basarab G.S."/>
            <person name="Jordan D.B."/>
        </authorList>
    </citation>
    <scope>FUNCTION</scope>
    <scope>CATALYTIC ACTIVITY</scope>
    <scope>BIOPHYSICOCHEMICAL PROPERTIES</scope>
    <scope>MUTAGENESIS OF PHE-53; HIS-110 AND ASN-131</scope>
</reference>
<reference key="16">
    <citation type="journal article" date="2002" name="Bioorg. Med. Chem.">
        <title>Design of inhibitors of scytalone dehydratase: probing interactions with an asparagine carboxamide.</title>
        <authorList>
            <person name="Basarab G.S."/>
            <person name="Jordan D.B."/>
            <person name="Gehret T.C."/>
            <person name="Schwartz R.S."/>
        </authorList>
    </citation>
    <scope>FUNCTION</scope>
    <scope>CATALYTIC ACTIVITY</scope>
    <scope>ACTIVITY REGULATION</scope>
</reference>
<reference key="17">
    <citation type="journal article" date="2004" name="Biosci. Biotechnol. Biochem.">
        <title>Enzymatic characterization of scytalone dehydratase Val75Met variant found in melanin biosynthesis dehydratase inhibitor (MBI-D) resistant strains of the rice blast fungus.</title>
        <authorList>
            <person name="Yamada N."/>
            <person name="Motoyama T."/>
            <person name="Nakasako M."/>
            <person name="Kagabu S."/>
            <person name="Kudo T."/>
            <person name="Yamaguchi I."/>
        </authorList>
    </citation>
    <scope>FUNCTION</scope>
    <scope>CATALYTIC ACTIVITY</scope>
    <scope>ACTIVITY REGULATION</scope>
    <scope>MUTAGENESIS OF VAL-75</scope>
</reference>
<reference key="18">
    <citation type="journal article" date="2004" name="Pest Manag. Sci.">
        <title>Mechanism of resistance to carpropamid in Magnaporthe grisea.</title>
        <authorList>
            <person name="Takagaki M."/>
            <person name="Kaku K."/>
            <person name="Watanabe S."/>
            <person name="Kawai K."/>
            <person name="Shimizu T."/>
            <person name="Sawada H."/>
            <person name="Kumakura K."/>
            <person name="Nagayama K."/>
        </authorList>
    </citation>
    <scope>ACTIVITY REGULATION</scope>
    <scope>MUTAGENESIS OF VAL-75</scope>
</reference>
<reference key="19">
    <citation type="journal article" date="1994" name="Structure">
        <title>Crystal structure of scytalone dehydratase -- a disease determinant of the rice pathogen, Magnaporthe grisea.</title>
        <authorList>
            <person name="Lundqvist T."/>
            <person name="Rice J."/>
            <person name="Hodge C.N."/>
            <person name="Basarab G.S."/>
            <person name="Pierce J."/>
            <person name="Lindqvist Y."/>
        </authorList>
    </citation>
    <scope>X-RAY CRYSTALLOGRAPHY (2.9 ANGSTROMS) IN COMPLEX WITH INHIBITOR</scope>
    <scope>SUBUNIT</scope>
    <scope>ACTIVE SITE</scope>
</reference>
<reference key="20">
    <citation type="journal article" date="1998" name="Biochemistry">
        <title>Cryogenic X-ray crystal structure analysis for the complex of scytalone dehydratase of a rice blast fungus and its tight-binding inhibitor, carpropamid: the structural basis of tight-binding inhibition.</title>
        <authorList>
            <person name="Nakasako M."/>
            <person name="Motoyama T."/>
            <person name="Kurahashi Y."/>
            <person name="Yamaguchi I."/>
        </authorList>
    </citation>
    <scope>X-RAY CRYSTALLOGRAPHY (2.1 ANGSTROMS) IN COMPLEX WITH INHIBITOR CARPROPAMID</scope>
</reference>
<reference key="21">
    <citation type="journal article" date="1998" name="Biochemistry">
        <title>Structure-based design of potent inhibitors of scytalone dehydratase: displacement of a water molecule from the active site.</title>
        <authorList>
            <person name="Chen J.M."/>
            <person name="Xu S.L."/>
            <person name="Wawrzak Z."/>
            <person name="Basarab G.S."/>
            <person name="Jordan D.B."/>
        </authorList>
    </citation>
    <scope>X-RAY CRYSTALLOGRAPHY (1.65 ANGSTROMS) OF 10-172 IN COMPLEX WITH INHIBITOR</scope>
</reference>
<reference key="22">
    <citation type="journal article" date="1999" name="Proteins">
        <title>High-resolution structures of scytalone dehydratase-inhibitor complexes crystallized at physiological pH.</title>
        <authorList>
            <person name="Wawrzak Z."/>
            <person name="Sandalova T."/>
            <person name="Steffens J.J."/>
            <person name="Basarab G.S."/>
            <person name="Lundqvist T."/>
            <person name="Lindqvist Y."/>
            <person name="Jordan D.B."/>
        </authorList>
    </citation>
    <scope>X-RAY CRYSTALLOGRAPHY (1.80 ANGSTROMS) OF 10-172 IN COMPLEX WITH INHIBITOR</scope>
</reference>
<reference key="23">
    <citation type="journal article" date="2002" name="Acta Crystallogr. D">
        <title>Crystallization of scytalone dehydratase F162A mutant in the unligated state and a preliminary X-ray diffraction study at 37 K.</title>
        <authorList>
            <person name="Motoyama T."/>
            <person name="Nakasako M."/>
            <person name="Yamaguchi I."/>
        </authorList>
    </citation>
    <scope>X-RAY CRYSTALLOGRAPHY (1.45 ANGSTROMS)</scope>
</reference>